<proteinExistence type="inferred from homology"/>
<organism>
    <name type="scientific">Buchnera aphidicola subsp. Schizaphis graminum (strain Sg)</name>
    <dbReference type="NCBI Taxonomy" id="198804"/>
    <lineage>
        <taxon>Bacteria</taxon>
        <taxon>Pseudomonadati</taxon>
        <taxon>Pseudomonadota</taxon>
        <taxon>Gammaproteobacteria</taxon>
        <taxon>Enterobacterales</taxon>
        <taxon>Erwiniaceae</taxon>
        <taxon>Buchnera</taxon>
    </lineage>
</organism>
<evidence type="ECO:0000255" key="1">
    <source>
        <dbReference type="HAMAP-Rule" id="MF_00361"/>
    </source>
</evidence>
<keyword id="KW-0067">ATP-binding</keyword>
<keyword id="KW-0963">Cytoplasm</keyword>
<keyword id="KW-0418">Kinase</keyword>
<keyword id="KW-0520">NAD</keyword>
<keyword id="KW-0521">NADP</keyword>
<keyword id="KW-0547">Nucleotide-binding</keyword>
<keyword id="KW-0808">Transferase</keyword>
<reference key="1">
    <citation type="journal article" date="2002" name="Science">
        <title>50 million years of genomic stasis in endosymbiotic bacteria.</title>
        <authorList>
            <person name="Tamas I."/>
            <person name="Klasson L."/>
            <person name="Canbaeck B."/>
            <person name="Naeslund A.K."/>
            <person name="Eriksson A.-S."/>
            <person name="Wernegreen J.J."/>
            <person name="Sandstroem J.P."/>
            <person name="Moran N.A."/>
            <person name="Andersson S.G.E."/>
        </authorList>
    </citation>
    <scope>NUCLEOTIDE SEQUENCE [LARGE SCALE GENOMIC DNA]</scope>
    <source>
        <strain>Sg</strain>
    </source>
</reference>
<dbReference type="EC" id="2.7.1.23" evidence="1"/>
<dbReference type="EMBL" id="AE013218">
    <property type="protein sequence ID" value="AAM67744.1"/>
    <property type="molecule type" value="Genomic_DNA"/>
</dbReference>
<dbReference type="RefSeq" id="WP_011053711.1">
    <property type="nucleotide sequence ID" value="NC_004061.1"/>
</dbReference>
<dbReference type="SMR" id="Q8K9V8"/>
<dbReference type="STRING" id="198804.BUsg_179"/>
<dbReference type="GeneID" id="93003647"/>
<dbReference type="KEGG" id="bas:BUsg_179"/>
<dbReference type="eggNOG" id="COG0061">
    <property type="taxonomic scope" value="Bacteria"/>
</dbReference>
<dbReference type="HOGENOM" id="CLU_008831_0_1_6"/>
<dbReference type="Proteomes" id="UP000000416">
    <property type="component" value="Chromosome"/>
</dbReference>
<dbReference type="GO" id="GO:0005737">
    <property type="term" value="C:cytoplasm"/>
    <property type="evidence" value="ECO:0007669"/>
    <property type="project" value="UniProtKB-SubCell"/>
</dbReference>
<dbReference type="GO" id="GO:0005524">
    <property type="term" value="F:ATP binding"/>
    <property type="evidence" value="ECO:0007669"/>
    <property type="project" value="UniProtKB-KW"/>
</dbReference>
<dbReference type="GO" id="GO:0046872">
    <property type="term" value="F:metal ion binding"/>
    <property type="evidence" value="ECO:0007669"/>
    <property type="project" value="UniProtKB-UniRule"/>
</dbReference>
<dbReference type="GO" id="GO:0051287">
    <property type="term" value="F:NAD binding"/>
    <property type="evidence" value="ECO:0007669"/>
    <property type="project" value="UniProtKB-ARBA"/>
</dbReference>
<dbReference type="GO" id="GO:0003951">
    <property type="term" value="F:NAD+ kinase activity"/>
    <property type="evidence" value="ECO:0007669"/>
    <property type="project" value="UniProtKB-UniRule"/>
</dbReference>
<dbReference type="GO" id="GO:0019674">
    <property type="term" value="P:NAD metabolic process"/>
    <property type="evidence" value="ECO:0007669"/>
    <property type="project" value="InterPro"/>
</dbReference>
<dbReference type="GO" id="GO:0006741">
    <property type="term" value="P:NADP biosynthetic process"/>
    <property type="evidence" value="ECO:0007669"/>
    <property type="project" value="UniProtKB-UniRule"/>
</dbReference>
<dbReference type="FunFam" id="2.60.200.30:FF:000001">
    <property type="entry name" value="NAD kinase"/>
    <property type="match status" value="1"/>
</dbReference>
<dbReference type="Gene3D" id="3.40.50.10330">
    <property type="entry name" value="Probable inorganic polyphosphate/atp-NAD kinase, domain 1"/>
    <property type="match status" value="1"/>
</dbReference>
<dbReference type="Gene3D" id="2.60.200.30">
    <property type="entry name" value="Probable inorganic polyphosphate/atp-NAD kinase, domain 2"/>
    <property type="match status" value="1"/>
</dbReference>
<dbReference type="HAMAP" id="MF_00361">
    <property type="entry name" value="NAD_kinase"/>
    <property type="match status" value="1"/>
</dbReference>
<dbReference type="InterPro" id="IPR017438">
    <property type="entry name" value="ATP-NAD_kinase_N"/>
</dbReference>
<dbReference type="InterPro" id="IPR017437">
    <property type="entry name" value="ATP-NAD_kinase_PpnK-typ_C"/>
</dbReference>
<dbReference type="InterPro" id="IPR016064">
    <property type="entry name" value="NAD/diacylglycerol_kinase_sf"/>
</dbReference>
<dbReference type="InterPro" id="IPR002504">
    <property type="entry name" value="NADK"/>
</dbReference>
<dbReference type="NCBIfam" id="NF002306">
    <property type="entry name" value="PRK01231.1"/>
    <property type="match status" value="1"/>
</dbReference>
<dbReference type="NCBIfam" id="NF002893">
    <property type="entry name" value="PRK03378.1"/>
    <property type="match status" value="1"/>
</dbReference>
<dbReference type="PANTHER" id="PTHR20275">
    <property type="entry name" value="NAD KINASE"/>
    <property type="match status" value="1"/>
</dbReference>
<dbReference type="PANTHER" id="PTHR20275:SF0">
    <property type="entry name" value="NAD KINASE"/>
    <property type="match status" value="1"/>
</dbReference>
<dbReference type="Pfam" id="PF01513">
    <property type="entry name" value="NAD_kinase"/>
    <property type="match status" value="1"/>
</dbReference>
<dbReference type="Pfam" id="PF20143">
    <property type="entry name" value="NAD_kinase_C"/>
    <property type="match status" value="1"/>
</dbReference>
<dbReference type="SUPFAM" id="SSF111331">
    <property type="entry name" value="NAD kinase/diacylglycerol kinase-like"/>
    <property type="match status" value="1"/>
</dbReference>
<sequence length="292" mass="33366">MKQYFNCIGIVGRPRHSTALITHEILYKWLIKKGYQVFIEYNISKKLNLKNPKTATLIEIGRLCDLAIVIGGDGNLLFTARILSYFNIKIIGINCGNLGFLTDLNPDNKFKKLSEVLSGKYFVENRFLLDVMIYKKEQVSKSSIAINEVVLHPKNVAHMIEFEVYINDNFAFSQRSDGLIISTPTGSTGYSLSAGGPIIETSLESILLVPMFPHTLSARPLLIRSDSVIRLRFSDIETDLKISCDSQIVLPVKKKEYVFIRRSNYYLNLIHPKSYNYFETLTSKLNWSKKFF</sequence>
<protein>
    <recommendedName>
        <fullName evidence="1">NAD kinase</fullName>
        <ecNumber evidence="1">2.7.1.23</ecNumber>
    </recommendedName>
    <alternativeName>
        <fullName evidence="1">ATP-dependent NAD kinase</fullName>
    </alternativeName>
</protein>
<comment type="function">
    <text evidence="1">Involved in the regulation of the intracellular balance of NAD and NADP, and is a key enzyme in the biosynthesis of NADP. Catalyzes specifically the phosphorylation on 2'-hydroxyl of the adenosine moiety of NAD to yield NADP.</text>
</comment>
<comment type="catalytic activity">
    <reaction evidence="1">
        <text>NAD(+) + ATP = ADP + NADP(+) + H(+)</text>
        <dbReference type="Rhea" id="RHEA:18629"/>
        <dbReference type="ChEBI" id="CHEBI:15378"/>
        <dbReference type="ChEBI" id="CHEBI:30616"/>
        <dbReference type="ChEBI" id="CHEBI:57540"/>
        <dbReference type="ChEBI" id="CHEBI:58349"/>
        <dbReference type="ChEBI" id="CHEBI:456216"/>
        <dbReference type="EC" id="2.7.1.23"/>
    </reaction>
</comment>
<comment type="cofactor">
    <cofactor evidence="1">
        <name>a divalent metal cation</name>
        <dbReference type="ChEBI" id="CHEBI:60240"/>
    </cofactor>
</comment>
<comment type="subcellular location">
    <subcellularLocation>
        <location evidence="1">Cytoplasm</location>
    </subcellularLocation>
</comment>
<comment type="similarity">
    <text evidence="1">Belongs to the NAD kinase family.</text>
</comment>
<feature type="chain" id="PRO_0000120606" description="NAD kinase">
    <location>
        <begin position="1"/>
        <end position="292"/>
    </location>
</feature>
<feature type="active site" description="Proton acceptor" evidence="1">
    <location>
        <position position="73"/>
    </location>
</feature>
<feature type="binding site" evidence="1">
    <location>
        <begin position="73"/>
        <end position="74"/>
    </location>
    <ligand>
        <name>NAD(+)</name>
        <dbReference type="ChEBI" id="CHEBI:57540"/>
    </ligand>
</feature>
<feature type="binding site" evidence="1">
    <location>
        <begin position="147"/>
        <end position="148"/>
    </location>
    <ligand>
        <name>NAD(+)</name>
        <dbReference type="ChEBI" id="CHEBI:57540"/>
    </ligand>
</feature>
<feature type="binding site" evidence="1">
    <location>
        <position position="158"/>
    </location>
    <ligand>
        <name>NAD(+)</name>
        <dbReference type="ChEBI" id="CHEBI:57540"/>
    </ligand>
</feature>
<feature type="binding site" evidence="1">
    <location>
        <position position="175"/>
    </location>
    <ligand>
        <name>NAD(+)</name>
        <dbReference type="ChEBI" id="CHEBI:57540"/>
    </ligand>
</feature>
<feature type="binding site" evidence="1">
    <location>
        <position position="177"/>
    </location>
    <ligand>
        <name>NAD(+)</name>
        <dbReference type="ChEBI" id="CHEBI:57540"/>
    </ligand>
</feature>
<feature type="binding site" evidence="1">
    <location>
        <begin position="188"/>
        <end position="193"/>
    </location>
    <ligand>
        <name>NAD(+)</name>
        <dbReference type="ChEBI" id="CHEBI:57540"/>
    </ligand>
</feature>
<feature type="binding site" evidence="1">
    <location>
        <position position="247"/>
    </location>
    <ligand>
        <name>NAD(+)</name>
        <dbReference type="ChEBI" id="CHEBI:57540"/>
    </ligand>
</feature>
<accession>Q8K9V8</accession>
<gene>
    <name evidence="1" type="primary">nadK</name>
    <name type="ordered locus">BUsg_179</name>
</gene>
<name>NADK_BUCAP</name>